<proteinExistence type="predicted"/>
<keyword id="KW-0472">Membrane</keyword>
<keyword id="KW-0479">Metal-binding</keyword>
<keyword id="KW-1185">Reference proteome</keyword>
<keyword id="KW-0812">Transmembrane</keyword>
<keyword id="KW-1133">Transmembrane helix</keyword>
<keyword id="KW-0862">Zinc</keyword>
<keyword id="KW-0863">Zinc-finger</keyword>
<gene>
    <name type="ORF">SPBC32F12.07c</name>
</gene>
<comment type="subcellular location">
    <subcellularLocation>
        <location evidence="3">Membrane</location>
        <topology evidence="3">Multi-pass membrane protein</topology>
    </subcellularLocation>
</comment>
<reference key="1">
    <citation type="journal article" date="2002" name="Nature">
        <title>The genome sequence of Schizosaccharomyces pombe.</title>
        <authorList>
            <person name="Wood V."/>
            <person name="Gwilliam R."/>
            <person name="Rajandream M.A."/>
            <person name="Lyne M.H."/>
            <person name="Lyne R."/>
            <person name="Stewart A."/>
            <person name="Sgouros J.G."/>
            <person name="Peat N."/>
            <person name="Hayles J."/>
            <person name="Baker S.G."/>
            <person name="Basham D."/>
            <person name="Bowman S."/>
            <person name="Brooks K."/>
            <person name="Brown D."/>
            <person name="Brown S."/>
            <person name="Chillingworth T."/>
            <person name="Churcher C.M."/>
            <person name="Collins M."/>
            <person name="Connor R."/>
            <person name="Cronin A."/>
            <person name="Davis P."/>
            <person name="Feltwell T."/>
            <person name="Fraser A."/>
            <person name="Gentles S."/>
            <person name="Goble A."/>
            <person name="Hamlin N."/>
            <person name="Harris D.E."/>
            <person name="Hidalgo J."/>
            <person name="Hodgson G."/>
            <person name="Holroyd S."/>
            <person name="Hornsby T."/>
            <person name="Howarth S."/>
            <person name="Huckle E.J."/>
            <person name="Hunt S."/>
            <person name="Jagels K."/>
            <person name="James K.D."/>
            <person name="Jones L."/>
            <person name="Jones M."/>
            <person name="Leather S."/>
            <person name="McDonald S."/>
            <person name="McLean J."/>
            <person name="Mooney P."/>
            <person name="Moule S."/>
            <person name="Mungall K.L."/>
            <person name="Murphy L.D."/>
            <person name="Niblett D."/>
            <person name="Odell C."/>
            <person name="Oliver K."/>
            <person name="O'Neil S."/>
            <person name="Pearson D."/>
            <person name="Quail M.A."/>
            <person name="Rabbinowitsch E."/>
            <person name="Rutherford K.M."/>
            <person name="Rutter S."/>
            <person name="Saunders D."/>
            <person name="Seeger K."/>
            <person name="Sharp S."/>
            <person name="Skelton J."/>
            <person name="Simmonds M.N."/>
            <person name="Squares R."/>
            <person name="Squares S."/>
            <person name="Stevens K."/>
            <person name="Taylor K."/>
            <person name="Taylor R.G."/>
            <person name="Tivey A."/>
            <person name="Walsh S.V."/>
            <person name="Warren T."/>
            <person name="Whitehead S."/>
            <person name="Woodward J.R."/>
            <person name="Volckaert G."/>
            <person name="Aert R."/>
            <person name="Robben J."/>
            <person name="Grymonprez B."/>
            <person name="Weltjens I."/>
            <person name="Vanstreels E."/>
            <person name="Rieger M."/>
            <person name="Schaefer M."/>
            <person name="Mueller-Auer S."/>
            <person name="Gabel C."/>
            <person name="Fuchs M."/>
            <person name="Duesterhoeft A."/>
            <person name="Fritzc C."/>
            <person name="Holzer E."/>
            <person name="Moestl D."/>
            <person name="Hilbert H."/>
            <person name="Borzym K."/>
            <person name="Langer I."/>
            <person name="Beck A."/>
            <person name="Lehrach H."/>
            <person name="Reinhardt R."/>
            <person name="Pohl T.M."/>
            <person name="Eger P."/>
            <person name="Zimmermann W."/>
            <person name="Wedler H."/>
            <person name="Wambutt R."/>
            <person name="Purnelle B."/>
            <person name="Goffeau A."/>
            <person name="Cadieu E."/>
            <person name="Dreano S."/>
            <person name="Gloux S."/>
            <person name="Lelaure V."/>
            <person name="Mottier S."/>
            <person name="Galibert F."/>
            <person name="Aves S.J."/>
            <person name="Xiang Z."/>
            <person name="Hunt C."/>
            <person name="Moore K."/>
            <person name="Hurst S.M."/>
            <person name="Lucas M."/>
            <person name="Rochet M."/>
            <person name="Gaillardin C."/>
            <person name="Tallada V.A."/>
            <person name="Garzon A."/>
            <person name="Thode G."/>
            <person name="Daga R.R."/>
            <person name="Cruzado L."/>
            <person name="Jimenez J."/>
            <person name="Sanchez M."/>
            <person name="del Rey F."/>
            <person name="Benito J."/>
            <person name="Dominguez A."/>
            <person name="Revuelta J.L."/>
            <person name="Moreno S."/>
            <person name="Armstrong J."/>
            <person name="Forsburg S.L."/>
            <person name="Cerutti L."/>
            <person name="Lowe T."/>
            <person name="McCombie W.R."/>
            <person name="Paulsen I."/>
            <person name="Potashkin J."/>
            <person name="Shpakovski G.V."/>
            <person name="Ussery D."/>
            <person name="Barrell B.G."/>
            <person name="Nurse P."/>
        </authorList>
    </citation>
    <scope>NUCLEOTIDE SEQUENCE [LARGE SCALE GENOMIC DNA]</scope>
    <source>
        <strain>972 / ATCC 24843</strain>
    </source>
</reference>
<feature type="chain" id="PRO_0000310480" description="Uncharacterized RING finger protein C32F12.07c">
    <location>
        <begin position="1"/>
        <end position="340"/>
    </location>
</feature>
<feature type="transmembrane region" description="Helical" evidence="1">
    <location>
        <begin position="249"/>
        <end position="269"/>
    </location>
</feature>
<feature type="transmembrane region" description="Helical" evidence="1">
    <location>
        <begin position="274"/>
        <end position="294"/>
    </location>
</feature>
<feature type="transmembrane region" description="Helical" evidence="1">
    <location>
        <begin position="300"/>
        <end position="320"/>
    </location>
</feature>
<feature type="zinc finger region" description="RING-CH-type" evidence="2">
    <location>
        <begin position="6"/>
        <end position="70"/>
    </location>
</feature>
<feature type="binding site" evidence="2">
    <location>
        <position position="14"/>
    </location>
    <ligand>
        <name>Zn(2+)</name>
        <dbReference type="ChEBI" id="CHEBI:29105"/>
        <label>1</label>
    </ligand>
</feature>
<feature type="binding site" evidence="2">
    <location>
        <position position="17"/>
    </location>
    <ligand>
        <name>Zn(2+)</name>
        <dbReference type="ChEBI" id="CHEBI:29105"/>
        <label>1</label>
    </ligand>
</feature>
<feature type="binding site" evidence="2">
    <location>
        <position position="37"/>
    </location>
    <ligand>
        <name>Zn(2+)</name>
        <dbReference type="ChEBI" id="CHEBI:29105"/>
        <label>2</label>
    </ligand>
</feature>
<feature type="binding site" evidence="2">
    <location>
        <position position="39"/>
    </location>
    <ligand>
        <name>Zn(2+)</name>
        <dbReference type="ChEBI" id="CHEBI:29105"/>
        <label>2</label>
    </ligand>
</feature>
<feature type="binding site" evidence="2">
    <location>
        <position position="44"/>
    </location>
    <ligand>
        <name>Zn(2+)</name>
        <dbReference type="ChEBI" id="CHEBI:29105"/>
        <label>1</label>
    </ligand>
</feature>
<feature type="binding site" evidence="2">
    <location>
        <position position="47"/>
    </location>
    <ligand>
        <name>Zn(2+)</name>
        <dbReference type="ChEBI" id="CHEBI:29105"/>
        <label>1</label>
    </ligand>
</feature>
<feature type="binding site" evidence="2">
    <location>
        <position position="60"/>
    </location>
    <ligand>
        <name>Zn(2+)</name>
        <dbReference type="ChEBI" id="CHEBI:29105"/>
        <label>2</label>
    </ligand>
</feature>
<feature type="binding site" evidence="2">
    <location>
        <position position="63"/>
    </location>
    <ligand>
        <name>Zn(2+)</name>
        <dbReference type="ChEBI" id="CHEBI:29105"/>
        <label>2</label>
    </ligand>
</feature>
<organism>
    <name type="scientific">Schizosaccharomyces pombe (strain 972 / ATCC 24843)</name>
    <name type="common">Fission yeast</name>
    <dbReference type="NCBI Taxonomy" id="284812"/>
    <lineage>
        <taxon>Eukaryota</taxon>
        <taxon>Fungi</taxon>
        <taxon>Dikarya</taxon>
        <taxon>Ascomycota</taxon>
        <taxon>Taphrinomycotina</taxon>
        <taxon>Schizosaccharomycetes</taxon>
        <taxon>Schizosaccharomycetales</taxon>
        <taxon>Schizosaccharomycetaceae</taxon>
        <taxon>Schizosaccharomyces</taxon>
    </lineage>
</organism>
<accession>O74371</accession>
<protein>
    <recommendedName>
        <fullName>Uncharacterized RING finger protein C32F12.07c</fullName>
    </recommendedName>
</protein>
<sequence>MTDTAKYEKSSARCWICYEEYDKKLCSLSNDSWRRPCRCSLIAHESCLISYITRSGSTRCPQCLTAYRIAKPPKEKSWAVNVLGIGHSLEAGLAQVTFGVGSCLGITKFIYSIFKQTGIWICKQVADESSLIEMLKKPVFSSVVLPLLPCMLVRFYEAPPYDIAFSLYTHFSIYSCAEKISNTSLLLCTLPWVRSLYKELMTRIFDGIVIGADGEFEDSETDWFRQFEAQVEHRNQVEDVNEREDTESEFWILLSVAHVFLDAFTTKILRIVRPILLFPLAGKFLGRFIPGNFTKLEKSIIGAFAALVFKDIFVYGFIAWRKRKPWSIRILDNPRRVSDS</sequence>
<name>YG87_SCHPO</name>
<dbReference type="EMBL" id="CU329671">
    <property type="protein sequence ID" value="CAA19368.1"/>
    <property type="molecule type" value="Genomic_DNA"/>
</dbReference>
<dbReference type="PIR" id="T40231">
    <property type="entry name" value="T40231"/>
</dbReference>
<dbReference type="RefSeq" id="NP_596150.1">
    <property type="nucleotide sequence ID" value="NM_001022069.2"/>
</dbReference>
<dbReference type="BioGRID" id="276774">
    <property type="interactions" value="13"/>
</dbReference>
<dbReference type="FunCoup" id="O74371">
    <property type="interactions" value="10"/>
</dbReference>
<dbReference type="iPTMnet" id="O74371"/>
<dbReference type="PaxDb" id="4896-SPBC32F12.07c.1"/>
<dbReference type="EnsemblFungi" id="SPBC32F12.07c.1">
    <property type="protein sequence ID" value="SPBC32F12.07c.1:pep"/>
    <property type="gene ID" value="SPBC32F12.07c"/>
</dbReference>
<dbReference type="KEGG" id="spo:2540242"/>
<dbReference type="PomBase" id="SPBC32F12.07c"/>
<dbReference type="VEuPathDB" id="FungiDB:SPBC32F12.07c"/>
<dbReference type="eggNOG" id="KOG3053">
    <property type="taxonomic scope" value="Eukaryota"/>
</dbReference>
<dbReference type="HOGENOM" id="CLU_820293_0_0_1"/>
<dbReference type="InParanoid" id="O74371"/>
<dbReference type="OMA" id="WRRPCKC"/>
<dbReference type="PhylomeDB" id="O74371"/>
<dbReference type="PRO" id="PR:O74371"/>
<dbReference type="Proteomes" id="UP000002485">
    <property type="component" value="Chromosome II"/>
</dbReference>
<dbReference type="GO" id="GO:0005741">
    <property type="term" value="C:mitochondrial outer membrane"/>
    <property type="evidence" value="ECO:0000318"/>
    <property type="project" value="GO_Central"/>
</dbReference>
<dbReference type="GO" id="GO:0061630">
    <property type="term" value="F:ubiquitin protein ligase activity"/>
    <property type="evidence" value="ECO:0000318"/>
    <property type="project" value="GO_Central"/>
</dbReference>
<dbReference type="GO" id="GO:0008270">
    <property type="term" value="F:zinc ion binding"/>
    <property type="evidence" value="ECO:0000255"/>
    <property type="project" value="PomBase"/>
</dbReference>
<dbReference type="GO" id="GO:0090141">
    <property type="term" value="P:positive regulation of mitochondrial fission"/>
    <property type="evidence" value="ECO:0000266"/>
    <property type="project" value="PomBase"/>
</dbReference>
<dbReference type="GO" id="GO:0000209">
    <property type="term" value="P:protein polyubiquitination"/>
    <property type="evidence" value="ECO:0000318"/>
    <property type="project" value="GO_Central"/>
</dbReference>
<dbReference type="GO" id="GO:0090140">
    <property type="term" value="P:regulation of mitochondrial fission"/>
    <property type="evidence" value="ECO:0000318"/>
    <property type="project" value="GO_Central"/>
</dbReference>
<dbReference type="Gene3D" id="3.30.40.10">
    <property type="entry name" value="Zinc/RING finger domain, C3HC4 (zinc finger)"/>
    <property type="match status" value="1"/>
</dbReference>
<dbReference type="InterPro" id="IPR011016">
    <property type="entry name" value="Znf_RING-CH"/>
</dbReference>
<dbReference type="InterPro" id="IPR013083">
    <property type="entry name" value="Znf_RING/FYVE/PHD"/>
</dbReference>
<dbReference type="PANTHER" id="PTHR46283">
    <property type="entry name" value="E3 UBIQUITIN-PROTEIN LIGASE MARCH5"/>
    <property type="match status" value="1"/>
</dbReference>
<dbReference type="Pfam" id="PF12906">
    <property type="entry name" value="RINGv"/>
    <property type="match status" value="1"/>
</dbReference>
<dbReference type="SMART" id="SM00744">
    <property type="entry name" value="RINGv"/>
    <property type="match status" value="1"/>
</dbReference>
<dbReference type="SUPFAM" id="SSF57850">
    <property type="entry name" value="RING/U-box"/>
    <property type="match status" value="1"/>
</dbReference>
<dbReference type="PROSITE" id="PS51292">
    <property type="entry name" value="ZF_RING_CH"/>
    <property type="match status" value="1"/>
</dbReference>
<evidence type="ECO:0000255" key="1"/>
<evidence type="ECO:0000255" key="2">
    <source>
        <dbReference type="PROSITE-ProRule" id="PRU00623"/>
    </source>
</evidence>
<evidence type="ECO:0000305" key="3"/>